<feature type="chain" id="PRO_0000267320" description="Nucleoside triphosphate pyrophosphatase">
    <location>
        <begin position="1"/>
        <end position="190"/>
    </location>
</feature>
<feature type="active site" description="Proton acceptor" evidence="1">
    <location>
        <position position="69"/>
    </location>
</feature>
<reference key="1">
    <citation type="journal article" date="2006" name="Proc. Natl. Acad. Sci. U.S.A.">
        <title>The complete genome sequence of a chronic atrophic gastritis Helicobacter pylori strain: evolution during disease progression.</title>
        <authorList>
            <person name="Oh J.D."/>
            <person name="Kling-Baeckhed H."/>
            <person name="Giannakis M."/>
            <person name="Xu J."/>
            <person name="Fulton R.S."/>
            <person name="Fulton L.A."/>
            <person name="Cordum H.S."/>
            <person name="Wang C."/>
            <person name="Elliott G."/>
            <person name="Edwards J."/>
            <person name="Mardis E.R."/>
            <person name="Engstrand L.G."/>
            <person name="Gordon J.I."/>
        </authorList>
    </citation>
    <scope>NUCLEOTIDE SEQUENCE [LARGE SCALE GENOMIC DNA]</scope>
    <source>
        <strain>HPAG1</strain>
    </source>
</reference>
<proteinExistence type="inferred from homology"/>
<accession>Q1CS23</accession>
<comment type="function">
    <text evidence="1">Nucleoside triphosphate pyrophosphatase. May have a dual role in cell division arrest and in preventing the incorporation of modified nucleotides into cellular nucleic acids.</text>
</comment>
<comment type="catalytic activity">
    <reaction evidence="1">
        <text>a ribonucleoside 5'-triphosphate + H2O = a ribonucleoside 5'-phosphate + diphosphate + H(+)</text>
        <dbReference type="Rhea" id="RHEA:23996"/>
        <dbReference type="ChEBI" id="CHEBI:15377"/>
        <dbReference type="ChEBI" id="CHEBI:15378"/>
        <dbReference type="ChEBI" id="CHEBI:33019"/>
        <dbReference type="ChEBI" id="CHEBI:58043"/>
        <dbReference type="ChEBI" id="CHEBI:61557"/>
        <dbReference type="EC" id="3.6.1.9"/>
    </reaction>
</comment>
<comment type="catalytic activity">
    <reaction evidence="1">
        <text>a 2'-deoxyribonucleoside 5'-triphosphate + H2O = a 2'-deoxyribonucleoside 5'-phosphate + diphosphate + H(+)</text>
        <dbReference type="Rhea" id="RHEA:44644"/>
        <dbReference type="ChEBI" id="CHEBI:15377"/>
        <dbReference type="ChEBI" id="CHEBI:15378"/>
        <dbReference type="ChEBI" id="CHEBI:33019"/>
        <dbReference type="ChEBI" id="CHEBI:61560"/>
        <dbReference type="ChEBI" id="CHEBI:65317"/>
        <dbReference type="EC" id="3.6.1.9"/>
    </reaction>
</comment>
<comment type="cofactor">
    <cofactor evidence="1">
        <name>a divalent metal cation</name>
        <dbReference type="ChEBI" id="CHEBI:60240"/>
    </cofactor>
</comment>
<comment type="subcellular location">
    <subcellularLocation>
        <location evidence="1">Cytoplasm</location>
    </subcellularLocation>
</comment>
<comment type="similarity">
    <text evidence="1">Belongs to the Maf family.</text>
</comment>
<organism>
    <name type="scientific">Helicobacter pylori (strain HPAG1)</name>
    <dbReference type="NCBI Taxonomy" id="357544"/>
    <lineage>
        <taxon>Bacteria</taxon>
        <taxon>Pseudomonadati</taxon>
        <taxon>Campylobacterota</taxon>
        <taxon>Epsilonproteobacteria</taxon>
        <taxon>Campylobacterales</taxon>
        <taxon>Helicobacteraceae</taxon>
        <taxon>Helicobacter</taxon>
    </lineage>
</organism>
<keyword id="KW-0963">Cytoplasm</keyword>
<keyword id="KW-0378">Hydrolase</keyword>
<keyword id="KW-0546">Nucleotide metabolism</keyword>
<name>NTPP_HELPH</name>
<dbReference type="EC" id="3.6.1.9" evidence="1"/>
<dbReference type="EMBL" id="CP000241">
    <property type="protein sequence ID" value="ABF85249.1"/>
    <property type="molecule type" value="Genomic_DNA"/>
</dbReference>
<dbReference type="RefSeq" id="WP_000420271.1">
    <property type="nucleotide sequence ID" value="NC_008086.1"/>
</dbReference>
<dbReference type="SMR" id="Q1CS23"/>
<dbReference type="KEGG" id="hpa:HPAG1_1182"/>
<dbReference type="HOGENOM" id="CLU_040416_2_2_7"/>
<dbReference type="GO" id="GO:0005737">
    <property type="term" value="C:cytoplasm"/>
    <property type="evidence" value="ECO:0007669"/>
    <property type="project" value="UniProtKB-SubCell"/>
</dbReference>
<dbReference type="GO" id="GO:0047429">
    <property type="term" value="F:nucleoside triphosphate diphosphatase activity"/>
    <property type="evidence" value="ECO:0007669"/>
    <property type="project" value="UniProtKB-EC"/>
</dbReference>
<dbReference type="GO" id="GO:0009117">
    <property type="term" value="P:nucleotide metabolic process"/>
    <property type="evidence" value="ECO:0007669"/>
    <property type="project" value="UniProtKB-KW"/>
</dbReference>
<dbReference type="FunFam" id="3.90.950.10:FF:000013">
    <property type="entry name" value="Nucleoside triphosphate pyrophosphatase"/>
    <property type="match status" value="1"/>
</dbReference>
<dbReference type="Gene3D" id="3.90.950.10">
    <property type="match status" value="1"/>
</dbReference>
<dbReference type="HAMAP" id="MF_00528">
    <property type="entry name" value="Maf"/>
    <property type="match status" value="1"/>
</dbReference>
<dbReference type="InterPro" id="IPR029001">
    <property type="entry name" value="ITPase-like_fam"/>
</dbReference>
<dbReference type="InterPro" id="IPR003697">
    <property type="entry name" value="Maf-like"/>
</dbReference>
<dbReference type="NCBIfam" id="TIGR00172">
    <property type="entry name" value="maf"/>
    <property type="match status" value="1"/>
</dbReference>
<dbReference type="NCBIfam" id="NF003141">
    <property type="entry name" value="PRK04056.1"/>
    <property type="match status" value="1"/>
</dbReference>
<dbReference type="PANTHER" id="PTHR43213">
    <property type="entry name" value="BIFUNCTIONAL DTTP/UTP PYROPHOSPHATASE/METHYLTRANSFERASE PROTEIN-RELATED"/>
    <property type="match status" value="1"/>
</dbReference>
<dbReference type="PANTHER" id="PTHR43213:SF5">
    <property type="entry name" value="BIFUNCTIONAL DTTP_UTP PYROPHOSPHATASE_METHYLTRANSFERASE PROTEIN-RELATED"/>
    <property type="match status" value="1"/>
</dbReference>
<dbReference type="Pfam" id="PF02545">
    <property type="entry name" value="Maf"/>
    <property type="match status" value="1"/>
</dbReference>
<dbReference type="PIRSF" id="PIRSF006305">
    <property type="entry name" value="Maf"/>
    <property type="match status" value="1"/>
</dbReference>
<dbReference type="SUPFAM" id="SSF52972">
    <property type="entry name" value="ITPase-like"/>
    <property type="match status" value="1"/>
</dbReference>
<evidence type="ECO:0000255" key="1">
    <source>
        <dbReference type="HAMAP-Rule" id="MF_00528"/>
    </source>
</evidence>
<gene>
    <name type="ordered locus">HPAG1_1182</name>
</gene>
<sequence length="190" mass="21221">MELILGSQSSARANLLKEHGIKFEQKALYFDEESLKTTDPREFVYLACKGKLEKAKELLANNCVIVVADSVVSVGNRMQRKAKNKQEALEFLKRQNGNEIEVLTCSALISPVLEWLDLSVFRARLKAFDPSEIEKYLESGLWQESTGCVRLEDFHKPYIKSSSKNLSVGLGLNVESLLGVLKLGAKLSSL</sequence>
<protein>
    <recommendedName>
        <fullName evidence="1">Nucleoside triphosphate pyrophosphatase</fullName>
        <ecNumber evidence="1">3.6.1.9</ecNumber>
    </recommendedName>
    <alternativeName>
        <fullName evidence="1">Nucleotide pyrophosphatase</fullName>
        <shortName evidence="1">Nucleotide PPase</shortName>
    </alternativeName>
</protein>